<protein>
    <recommendedName>
        <fullName evidence="1">V-type ATP synthase alpha chain</fullName>
        <ecNumber evidence="1">7.1.2.2</ecNumber>
    </recommendedName>
    <alternativeName>
        <fullName evidence="1">V-ATPase subunit A</fullName>
    </alternativeName>
</protein>
<evidence type="ECO:0000255" key="1">
    <source>
        <dbReference type="HAMAP-Rule" id="MF_00309"/>
    </source>
</evidence>
<sequence length="579" mass="61556">MSGTLVRMAGPTVVAEGLAGASLNEVVRVGEERLLGEIIRIEGDRATIQVYEETAGLALGEPVEASGEPLAVELGPGLLGSVFDGVQRPLSELAAREGDFLGRGASLPALDRARAWEFEPAVAPGDRVEGGVRLGVARAPGAPDHPVVVPPGVAGRVAEVRAGARRVEEPAVLLEGGATLALLERWPVRRPRPARRRLPPDVPFLTGQRVLDCFFPVSAGGTAVVPGGFGTGKTVLEQSLAKWAAADVVVYVGCGERGNEMSEVLDEFPRLEDPRTGGPLLARTVMIVNTSNMPVAAREASIYTGAAIAEYFRDMGRSVALMIDSTSRWAEALREISARLEEMPGEEGYPTYLASRLARFYERAGRVETLGGAEGAVTMVGAVSPPGGDLSEPVTQCSLRATGALWALSADLAHRRHYPAVDWSVSFTLEGDRLAGWFEREAGDGFGALRDEARKLLQRERELAEVAELVGTESLQDAERLVLESARLLREGFLRQSALDPADATCPPAKAFEMLRLFLEWHRRAGAAIGAGVPLRSILDTGLGARLLRLGQLPAAEVPAAAAALRADLSEALARMEAE</sequence>
<name>VATA_ANADE</name>
<keyword id="KW-0066">ATP synthesis</keyword>
<keyword id="KW-0067">ATP-binding</keyword>
<keyword id="KW-0375">Hydrogen ion transport</keyword>
<keyword id="KW-0406">Ion transport</keyword>
<keyword id="KW-0547">Nucleotide-binding</keyword>
<keyword id="KW-1185">Reference proteome</keyword>
<keyword id="KW-1278">Translocase</keyword>
<keyword id="KW-0813">Transport</keyword>
<proteinExistence type="inferred from homology"/>
<gene>
    <name evidence="1" type="primary">atpA</name>
    <name type="ordered locus">Adeh_1202</name>
</gene>
<feature type="chain" id="PRO_0000322457" description="V-type ATP synthase alpha chain">
    <location>
        <begin position="1"/>
        <end position="579"/>
    </location>
</feature>
<feature type="binding site" evidence="1">
    <location>
        <begin position="227"/>
        <end position="234"/>
    </location>
    <ligand>
        <name>ATP</name>
        <dbReference type="ChEBI" id="CHEBI:30616"/>
    </ligand>
</feature>
<dbReference type="EC" id="7.1.2.2" evidence="1"/>
<dbReference type="EMBL" id="CP000251">
    <property type="protein sequence ID" value="ABC80976.1"/>
    <property type="molecule type" value="Genomic_DNA"/>
</dbReference>
<dbReference type="RefSeq" id="WP_011420259.1">
    <property type="nucleotide sequence ID" value="NC_007760.1"/>
</dbReference>
<dbReference type="SMR" id="Q2IQ95"/>
<dbReference type="STRING" id="290397.Adeh_1202"/>
<dbReference type="KEGG" id="ade:Adeh_1202"/>
<dbReference type="eggNOG" id="COG1155">
    <property type="taxonomic scope" value="Bacteria"/>
</dbReference>
<dbReference type="HOGENOM" id="CLU_008162_3_1_7"/>
<dbReference type="OrthoDB" id="9801639at2"/>
<dbReference type="Proteomes" id="UP000001935">
    <property type="component" value="Chromosome"/>
</dbReference>
<dbReference type="GO" id="GO:0045259">
    <property type="term" value="C:proton-transporting ATP synthase complex"/>
    <property type="evidence" value="ECO:0007669"/>
    <property type="project" value="UniProtKB-ARBA"/>
</dbReference>
<dbReference type="GO" id="GO:0005524">
    <property type="term" value="F:ATP binding"/>
    <property type="evidence" value="ECO:0007669"/>
    <property type="project" value="UniProtKB-UniRule"/>
</dbReference>
<dbReference type="GO" id="GO:0046933">
    <property type="term" value="F:proton-transporting ATP synthase activity, rotational mechanism"/>
    <property type="evidence" value="ECO:0007669"/>
    <property type="project" value="UniProtKB-UniRule"/>
</dbReference>
<dbReference type="GO" id="GO:0046961">
    <property type="term" value="F:proton-transporting ATPase activity, rotational mechanism"/>
    <property type="evidence" value="ECO:0007669"/>
    <property type="project" value="InterPro"/>
</dbReference>
<dbReference type="GO" id="GO:0042777">
    <property type="term" value="P:proton motive force-driven plasma membrane ATP synthesis"/>
    <property type="evidence" value="ECO:0007669"/>
    <property type="project" value="UniProtKB-UniRule"/>
</dbReference>
<dbReference type="CDD" id="cd18111">
    <property type="entry name" value="ATP-synt_V_A-type_alpha_C"/>
    <property type="match status" value="1"/>
</dbReference>
<dbReference type="CDD" id="cd18119">
    <property type="entry name" value="ATP-synt_V_A-type_alpha_N"/>
    <property type="match status" value="1"/>
</dbReference>
<dbReference type="CDD" id="cd01134">
    <property type="entry name" value="V_A-ATPase_A"/>
    <property type="match status" value="1"/>
</dbReference>
<dbReference type="FunFam" id="2.40.30.20:FF:000002">
    <property type="entry name" value="V-type proton ATPase catalytic subunit A"/>
    <property type="match status" value="1"/>
</dbReference>
<dbReference type="Gene3D" id="2.40.30.20">
    <property type="match status" value="1"/>
</dbReference>
<dbReference type="Gene3D" id="2.40.50.100">
    <property type="match status" value="1"/>
</dbReference>
<dbReference type="Gene3D" id="1.10.1140.10">
    <property type="entry name" value="Bovine Mitochondrial F1-atpase, Atp Synthase Beta Chain, Chain D, domain 3"/>
    <property type="match status" value="1"/>
</dbReference>
<dbReference type="Gene3D" id="3.40.50.300">
    <property type="entry name" value="P-loop containing nucleotide triphosphate hydrolases"/>
    <property type="match status" value="1"/>
</dbReference>
<dbReference type="HAMAP" id="MF_00309">
    <property type="entry name" value="ATP_synth_A_arch"/>
    <property type="match status" value="1"/>
</dbReference>
<dbReference type="InterPro" id="IPR055190">
    <property type="entry name" value="ATP-synt_VA_C"/>
</dbReference>
<dbReference type="InterPro" id="IPR031686">
    <property type="entry name" value="ATP-synth_a_Xtn"/>
</dbReference>
<dbReference type="InterPro" id="IPR023366">
    <property type="entry name" value="ATP_synth_asu-like_sf"/>
</dbReference>
<dbReference type="InterPro" id="IPR004100">
    <property type="entry name" value="ATPase_F1/V1/A1_a/bsu_N"/>
</dbReference>
<dbReference type="InterPro" id="IPR036121">
    <property type="entry name" value="ATPase_F1/V1/A1_a/bsu_N_sf"/>
</dbReference>
<dbReference type="InterPro" id="IPR000194">
    <property type="entry name" value="ATPase_F1/V1/A1_a/bsu_nucl-bd"/>
</dbReference>
<dbReference type="InterPro" id="IPR024034">
    <property type="entry name" value="ATPase_F1/V1_b/a_C"/>
</dbReference>
<dbReference type="InterPro" id="IPR027417">
    <property type="entry name" value="P-loop_NTPase"/>
</dbReference>
<dbReference type="InterPro" id="IPR022878">
    <property type="entry name" value="V-ATPase_asu"/>
</dbReference>
<dbReference type="NCBIfam" id="NF003220">
    <property type="entry name" value="PRK04192.1"/>
    <property type="match status" value="1"/>
</dbReference>
<dbReference type="PANTHER" id="PTHR43607:SF1">
    <property type="entry name" value="H(+)-TRANSPORTING TWO-SECTOR ATPASE"/>
    <property type="match status" value="1"/>
</dbReference>
<dbReference type="PANTHER" id="PTHR43607">
    <property type="entry name" value="V-TYPE PROTON ATPASE CATALYTIC SUBUNIT A"/>
    <property type="match status" value="1"/>
</dbReference>
<dbReference type="Pfam" id="PF00006">
    <property type="entry name" value="ATP-synt_ab"/>
    <property type="match status" value="1"/>
</dbReference>
<dbReference type="Pfam" id="PF02874">
    <property type="entry name" value="ATP-synt_ab_N"/>
    <property type="match status" value="1"/>
</dbReference>
<dbReference type="Pfam" id="PF16886">
    <property type="entry name" value="ATP-synt_ab_Xtn"/>
    <property type="match status" value="1"/>
</dbReference>
<dbReference type="Pfam" id="PF22919">
    <property type="entry name" value="ATP-synt_VA_C"/>
    <property type="match status" value="1"/>
</dbReference>
<dbReference type="SUPFAM" id="SSF47917">
    <property type="entry name" value="C-terminal domain of alpha and beta subunits of F1 ATP synthase"/>
    <property type="match status" value="1"/>
</dbReference>
<dbReference type="SUPFAM" id="SSF50615">
    <property type="entry name" value="N-terminal domain of alpha and beta subunits of F1 ATP synthase"/>
    <property type="match status" value="1"/>
</dbReference>
<dbReference type="SUPFAM" id="SSF52540">
    <property type="entry name" value="P-loop containing nucleoside triphosphate hydrolases"/>
    <property type="match status" value="1"/>
</dbReference>
<organism>
    <name type="scientific">Anaeromyxobacter dehalogenans (strain 2CP-C)</name>
    <dbReference type="NCBI Taxonomy" id="290397"/>
    <lineage>
        <taxon>Bacteria</taxon>
        <taxon>Pseudomonadati</taxon>
        <taxon>Myxococcota</taxon>
        <taxon>Myxococcia</taxon>
        <taxon>Myxococcales</taxon>
        <taxon>Cystobacterineae</taxon>
        <taxon>Anaeromyxobacteraceae</taxon>
        <taxon>Anaeromyxobacter</taxon>
    </lineage>
</organism>
<reference key="1">
    <citation type="submission" date="2006-01" db="EMBL/GenBank/DDBJ databases">
        <title>Complete sequence of Anaeromyxobacter dehalogenans 2CP-C.</title>
        <authorList>
            <person name="Copeland A."/>
            <person name="Lucas S."/>
            <person name="Lapidus A."/>
            <person name="Barry K."/>
            <person name="Detter J.C."/>
            <person name="Glavina T."/>
            <person name="Hammon N."/>
            <person name="Israni S."/>
            <person name="Pitluck S."/>
            <person name="Brettin T."/>
            <person name="Bruce D."/>
            <person name="Han C."/>
            <person name="Tapia R."/>
            <person name="Gilna P."/>
            <person name="Kiss H."/>
            <person name="Schmutz J."/>
            <person name="Larimer F."/>
            <person name="Land M."/>
            <person name="Kyrpides N."/>
            <person name="Anderson I."/>
            <person name="Sanford R.A."/>
            <person name="Ritalahti K.M."/>
            <person name="Thomas H.S."/>
            <person name="Kirby J.R."/>
            <person name="Zhulin I.B."/>
            <person name="Loeffler F.E."/>
            <person name="Richardson P."/>
        </authorList>
    </citation>
    <scope>NUCLEOTIDE SEQUENCE [LARGE SCALE GENOMIC DNA]</scope>
    <source>
        <strain>2CP-C</strain>
    </source>
</reference>
<comment type="function">
    <text evidence="1">Produces ATP from ADP in the presence of a proton gradient across the membrane. The V-type alpha chain is a catalytic subunit.</text>
</comment>
<comment type="catalytic activity">
    <reaction evidence="1">
        <text>ATP + H2O + 4 H(+)(in) = ADP + phosphate + 5 H(+)(out)</text>
        <dbReference type="Rhea" id="RHEA:57720"/>
        <dbReference type="ChEBI" id="CHEBI:15377"/>
        <dbReference type="ChEBI" id="CHEBI:15378"/>
        <dbReference type="ChEBI" id="CHEBI:30616"/>
        <dbReference type="ChEBI" id="CHEBI:43474"/>
        <dbReference type="ChEBI" id="CHEBI:456216"/>
        <dbReference type="EC" id="7.1.2.2"/>
    </reaction>
</comment>
<comment type="similarity">
    <text evidence="1">Belongs to the ATPase alpha/beta chains family.</text>
</comment>
<accession>Q2IQ95</accession>